<keyword id="KW-1185">Reference proteome</keyword>
<comment type="induction">
    <text evidence="1 2">Expression is regulated by various nitrogen sources.</text>
</comment>
<comment type="miscellaneous">
    <text>Sensitive to nitrogen catabolite repression.</text>
</comment>
<comment type="similarity">
    <text evidence="3">Belongs to the HyuE racemase family.</text>
</comment>
<proteinExistence type="evidence at transcript level"/>
<evidence type="ECO:0000269" key="1">
    <source>
    </source>
</evidence>
<evidence type="ECO:0000269" key="2">
    <source>
    </source>
</evidence>
<evidence type="ECO:0000305" key="3"/>
<reference key="1">
    <citation type="journal article" date="1991" name="Gene">
        <title>Sequences of two adjacent genes, one (DAL2) encoding allantoicase and another (DCG1) sensitive to nitrogen-catabolite repression in Saccharomyces cerevisiae.</title>
        <authorList>
            <person name="Yoo H.S."/>
            <person name="Cooper T.G."/>
        </authorList>
    </citation>
    <scope>NUCLEOTIDE SEQUENCE [GENOMIC DNA]</scope>
</reference>
<reference key="2">
    <citation type="journal article" date="1997" name="Nature">
        <title>The nucleotide sequence of Saccharomyces cerevisiae chromosome IX.</title>
        <authorList>
            <person name="Churcher C.M."/>
            <person name="Bowman S."/>
            <person name="Badcock K."/>
            <person name="Bankier A.T."/>
            <person name="Brown D."/>
            <person name="Chillingworth T."/>
            <person name="Connor R."/>
            <person name="Devlin K."/>
            <person name="Gentles S."/>
            <person name="Hamlin N."/>
            <person name="Harris D.E."/>
            <person name="Horsnell T."/>
            <person name="Hunt S."/>
            <person name="Jagels K."/>
            <person name="Jones M."/>
            <person name="Lye G."/>
            <person name="Moule S."/>
            <person name="Odell C."/>
            <person name="Pearson D."/>
            <person name="Rajandream M.A."/>
            <person name="Rice P."/>
            <person name="Rowley N."/>
            <person name="Skelton J."/>
            <person name="Smith V."/>
            <person name="Walsh S.V."/>
            <person name="Whitehead S."/>
            <person name="Barrell B.G."/>
        </authorList>
    </citation>
    <scope>NUCLEOTIDE SEQUENCE [LARGE SCALE GENOMIC DNA]</scope>
    <source>
        <strain>ATCC 204508 / S288c</strain>
    </source>
</reference>
<reference key="3">
    <citation type="journal article" date="2014" name="G3 (Bethesda)">
        <title>The reference genome sequence of Saccharomyces cerevisiae: Then and now.</title>
        <authorList>
            <person name="Engel S.R."/>
            <person name="Dietrich F.S."/>
            <person name="Fisk D.G."/>
            <person name="Binkley G."/>
            <person name="Balakrishnan R."/>
            <person name="Costanzo M.C."/>
            <person name="Dwight S.S."/>
            <person name="Hitz B.C."/>
            <person name="Karra K."/>
            <person name="Nash R.S."/>
            <person name="Weng S."/>
            <person name="Wong E.D."/>
            <person name="Lloyd P."/>
            <person name="Skrzypek M.S."/>
            <person name="Miyasato S.R."/>
            <person name="Simison M."/>
            <person name="Cherry J.M."/>
        </authorList>
    </citation>
    <scope>GENOME REANNOTATION</scope>
    <source>
        <strain>ATCC 204508 / S288c</strain>
    </source>
</reference>
<reference key="4">
    <citation type="journal article" date="2007" name="Genome Res.">
        <title>Approaching a complete repository of sequence-verified protein-encoding clones for Saccharomyces cerevisiae.</title>
        <authorList>
            <person name="Hu Y."/>
            <person name="Rolfs A."/>
            <person name="Bhullar B."/>
            <person name="Murthy T.V.S."/>
            <person name="Zhu C."/>
            <person name="Berger M.F."/>
            <person name="Camargo A.A."/>
            <person name="Kelley F."/>
            <person name="McCarron S."/>
            <person name="Jepson D."/>
            <person name="Richardson A."/>
            <person name="Raphael J."/>
            <person name="Moreira D."/>
            <person name="Taycher E."/>
            <person name="Zuo D."/>
            <person name="Mohr S."/>
            <person name="Kane M.F."/>
            <person name="Williamson J."/>
            <person name="Simpson A.J.G."/>
            <person name="Bulyk M.L."/>
            <person name="Harlow E."/>
            <person name="Marsischky G."/>
            <person name="Kolodner R.D."/>
            <person name="LaBaer J."/>
        </authorList>
    </citation>
    <scope>NUCLEOTIDE SEQUENCE [GENOMIC DNA]</scope>
    <source>
        <strain>ATCC 204508 / S288c</strain>
    </source>
</reference>
<reference key="5">
    <citation type="journal article" date="2006" name="Appl. Environ. Microbiol.">
        <title>Global transcriptional and physiological responses of Saccharomyces cerevisiae to ammonium, L-alanine, or L-glutamine limitation.</title>
        <authorList>
            <person name="Usaite R."/>
            <person name="Patil K.R."/>
            <person name="Grotkjaer T."/>
            <person name="Nielsen J."/>
            <person name="Regenberg B."/>
        </authorList>
    </citation>
    <scope>INDUCTION</scope>
</reference>
<reference key="6">
    <citation type="journal article" date="2007" name="Mol. Cell. Biol.">
        <title>Effect of 21 different nitrogen sources on global gene expression in the yeast Saccharomyces cerevisiae.</title>
        <authorList>
            <person name="Godard P."/>
            <person name="Urrestarazu A."/>
            <person name="Vissers S."/>
            <person name="Kontos K."/>
            <person name="Bontempi G."/>
            <person name="van Helden J."/>
            <person name="Andre B."/>
        </authorList>
    </citation>
    <scope>INDUCTION</scope>
</reference>
<organism>
    <name type="scientific">Saccharomyces cerevisiae (strain ATCC 204508 / S288c)</name>
    <name type="common">Baker's yeast</name>
    <dbReference type="NCBI Taxonomy" id="559292"/>
    <lineage>
        <taxon>Eukaryota</taxon>
        <taxon>Fungi</taxon>
        <taxon>Dikarya</taxon>
        <taxon>Ascomycota</taxon>
        <taxon>Saccharomycotina</taxon>
        <taxon>Saccharomycetes</taxon>
        <taxon>Saccharomycetales</taxon>
        <taxon>Saccharomycetaceae</taxon>
        <taxon>Saccharomyces</taxon>
    </lineage>
</organism>
<feature type="chain" id="PRO_0000079806" description="Protein DCG1">
    <location>
        <begin position="1"/>
        <end position="244"/>
    </location>
</feature>
<sequence length="244" mass="27313">METRILVVNPNSSKSMTVSLRETIEKTFSMESCKISYFTGPDTSPPQIDGQETSIKSMEACLPLLIDDQESVYYFQKFNGILIACFSDHPLVAKIKDRAAKEKADVSIVGLLDSSINYCNLVGKKFSIITSNKEWIPILNNSVESKFLTGNTVNKNLWKGTVSTDLQVLDLHSPENFQQIAEIIYRENIKKLDSDIVILGCAGFSGLQNKLAKTFQRDGTLFLDTIEIGLQILITMIRFVNSQK</sequence>
<gene>
    <name type="primary">DCG1</name>
    <name type="ordered locus">YIR030C</name>
</gene>
<protein>
    <recommendedName>
        <fullName>Protein DCG1</fullName>
    </recommendedName>
</protein>
<dbReference type="EMBL" id="M64719">
    <property type="protein sequence ID" value="AAA34562.1"/>
    <property type="molecule type" value="Genomic_DNA"/>
</dbReference>
<dbReference type="EMBL" id="Z38061">
    <property type="protein sequence ID" value="CAA86190.1"/>
    <property type="molecule type" value="Genomic_DNA"/>
</dbReference>
<dbReference type="EMBL" id="AY692748">
    <property type="protein sequence ID" value="AAT92767.1"/>
    <property type="molecule type" value="Genomic_DNA"/>
</dbReference>
<dbReference type="EMBL" id="BK006942">
    <property type="protein sequence ID" value="DAA08577.1"/>
    <property type="molecule type" value="Genomic_DNA"/>
</dbReference>
<dbReference type="PIR" id="S48492">
    <property type="entry name" value="S48492"/>
</dbReference>
<dbReference type="RefSeq" id="NP_012296.1">
    <property type="nucleotide sequence ID" value="NM_001179552.1"/>
</dbReference>
<dbReference type="SMR" id="P32460"/>
<dbReference type="BioGRID" id="35021">
    <property type="interactions" value="10"/>
</dbReference>
<dbReference type="FunCoup" id="P32460">
    <property type="interactions" value="69"/>
</dbReference>
<dbReference type="IntAct" id="P32460">
    <property type="interactions" value="1"/>
</dbReference>
<dbReference type="MINT" id="P32460"/>
<dbReference type="STRING" id="4932.YIR030C"/>
<dbReference type="iPTMnet" id="P32460"/>
<dbReference type="PaxDb" id="4932-YIR030C"/>
<dbReference type="PeptideAtlas" id="P32460"/>
<dbReference type="EnsemblFungi" id="YIR030C_mRNA">
    <property type="protein sequence ID" value="YIR030C"/>
    <property type="gene ID" value="YIR030C"/>
</dbReference>
<dbReference type="GeneID" id="854848"/>
<dbReference type="KEGG" id="sce:YIR030C"/>
<dbReference type="AGR" id="SGD:S000001469"/>
<dbReference type="SGD" id="S000001469">
    <property type="gene designation" value="DCG1"/>
</dbReference>
<dbReference type="VEuPathDB" id="FungiDB:YIR030C"/>
<dbReference type="eggNOG" id="ENOG502RZ0H">
    <property type="taxonomic scope" value="Eukaryota"/>
</dbReference>
<dbReference type="HOGENOM" id="CLU_053002_1_0_1"/>
<dbReference type="InParanoid" id="P32460"/>
<dbReference type="OMA" id="ITSNKEW"/>
<dbReference type="OrthoDB" id="412018at2759"/>
<dbReference type="BioCyc" id="YEAST:G3O-31447-MONOMER"/>
<dbReference type="PRO" id="PR:P32460"/>
<dbReference type="Proteomes" id="UP000002311">
    <property type="component" value="Chromosome IX"/>
</dbReference>
<dbReference type="RNAct" id="P32460">
    <property type="molecule type" value="protein"/>
</dbReference>
<dbReference type="GO" id="GO:0047661">
    <property type="term" value="F:amino-acid racemase activity"/>
    <property type="evidence" value="ECO:0007669"/>
    <property type="project" value="InterPro"/>
</dbReference>
<dbReference type="Gene3D" id="3.40.50.12500">
    <property type="match status" value="1"/>
</dbReference>
<dbReference type="InterPro" id="IPR015942">
    <property type="entry name" value="Asp/Glu/hydantoin_racemase"/>
</dbReference>
<dbReference type="InterPro" id="IPR052186">
    <property type="entry name" value="Hydantoin_racemase-like"/>
</dbReference>
<dbReference type="InterPro" id="IPR053714">
    <property type="entry name" value="Iso_Racemase_Enz_sf"/>
</dbReference>
<dbReference type="PANTHER" id="PTHR28047">
    <property type="entry name" value="PROTEIN DCG1"/>
    <property type="match status" value="1"/>
</dbReference>
<dbReference type="PANTHER" id="PTHR28047:SF5">
    <property type="entry name" value="PROTEIN DCG1"/>
    <property type="match status" value="1"/>
</dbReference>
<dbReference type="Pfam" id="PF01177">
    <property type="entry name" value="Asp_Glu_race"/>
    <property type="match status" value="1"/>
</dbReference>
<name>DCG1_YEAST</name>
<accession>P32460</accession>
<accession>D6VVW1</accession>